<evidence type="ECO:0000250" key="1"/>
<evidence type="ECO:0000255" key="2">
    <source>
        <dbReference type="PROSITE-ProRule" id="PRU00593"/>
    </source>
</evidence>
<gene>
    <name type="primary">gadX</name>
    <name type="ordered locus">c4327</name>
</gene>
<feature type="chain" id="PRO_0000194521" description="HTH-type transcriptional regulator GadX">
    <location>
        <begin position="1"/>
        <end position="274"/>
    </location>
</feature>
<feature type="domain" description="HTH araC/xylS-type" evidence="2">
    <location>
        <begin position="145"/>
        <end position="242"/>
    </location>
</feature>
<feature type="DNA-binding region" description="H-T-H motif" evidence="2">
    <location>
        <begin position="162"/>
        <end position="183"/>
    </location>
</feature>
<feature type="DNA-binding region" description="H-T-H motif" evidence="2">
    <location>
        <begin position="209"/>
        <end position="232"/>
    </location>
</feature>
<sequence length="274" mass="31306">MQPLHGNCLIAYARHKYILTMVNGEYRYFNGGDLVFADASQIQVDKCVENFVLVSRDTLSLFLPMLKEEALKLHVHKKVPSLLVHHCTRDIPVFQEVAQLSQNKNLRYAEMLRKRALIFALLSVFLEDTQFIPLLLNVLQPNMRTRVCTVINNNIAHEWTLARIASELLMSPSLLKKKLREEGTSYSQLLTECRMQRALQLIVIYGVSIKRVAVSCGYHSVSYFIYVFRNYYGMTPTEYQERSAQELPNCGSAASMAAQGIFYGTDRSAEGIRL</sequence>
<comment type="function">
    <text evidence="1">Positively regulates the expression of about fifteen genes involved in acid resistance such as gadA, gadB and gadC. Depending on the conditions (growth phase and medium), can repress gadW (By similarity).</text>
</comment>
<comment type="subunit">
    <text evidence="1">Homodimer.</text>
</comment>
<comment type="induction">
    <text evidence="1">Expression can be activated by RpoS and repressed by CRP, H-NS and GadW, depending on the conditions.</text>
</comment>
<keyword id="KW-0010">Activator</keyword>
<keyword id="KW-0238">DNA-binding</keyword>
<keyword id="KW-1185">Reference proteome</keyword>
<keyword id="KW-0678">Repressor</keyword>
<keyword id="KW-0804">Transcription</keyword>
<keyword id="KW-0805">Transcription regulation</keyword>
<reference key="1">
    <citation type="journal article" date="2002" name="Proc. Natl. Acad. Sci. U.S.A.">
        <title>Extensive mosaic structure revealed by the complete genome sequence of uropathogenic Escherichia coli.</title>
        <authorList>
            <person name="Welch R.A."/>
            <person name="Burland V."/>
            <person name="Plunkett G. III"/>
            <person name="Redford P."/>
            <person name="Roesch P."/>
            <person name="Rasko D."/>
            <person name="Buckles E.L."/>
            <person name="Liou S.-R."/>
            <person name="Boutin A."/>
            <person name="Hackett J."/>
            <person name="Stroud D."/>
            <person name="Mayhew G.F."/>
            <person name="Rose D.J."/>
            <person name="Zhou S."/>
            <person name="Schwartz D.C."/>
            <person name="Perna N.T."/>
            <person name="Mobley H.L.T."/>
            <person name="Donnenberg M.S."/>
            <person name="Blattner F.R."/>
        </authorList>
    </citation>
    <scope>NUCLEOTIDE SEQUENCE [LARGE SCALE GENOMIC DNA]</scope>
    <source>
        <strain>CFT073 / ATCC 700928 / UPEC</strain>
    </source>
</reference>
<proteinExistence type="inferred from homology"/>
<accession>Q8FCI6</accession>
<organism>
    <name type="scientific">Escherichia coli O6:H1 (strain CFT073 / ATCC 700928 / UPEC)</name>
    <dbReference type="NCBI Taxonomy" id="199310"/>
    <lineage>
        <taxon>Bacteria</taxon>
        <taxon>Pseudomonadati</taxon>
        <taxon>Pseudomonadota</taxon>
        <taxon>Gammaproteobacteria</taxon>
        <taxon>Enterobacterales</taxon>
        <taxon>Enterobacteriaceae</taxon>
        <taxon>Escherichia</taxon>
    </lineage>
</organism>
<dbReference type="EMBL" id="AE014075">
    <property type="protein sequence ID" value="AAN82763.1"/>
    <property type="molecule type" value="Genomic_DNA"/>
</dbReference>
<dbReference type="RefSeq" id="WP_001182743.1">
    <property type="nucleotide sequence ID" value="NZ_CP051263.1"/>
</dbReference>
<dbReference type="SMR" id="Q8FCI6"/>
<dbReference type="STRING" id="199310.c4327"/>
<dbReference type="KEGG" id="ecc:c4327"/>
<dbReference type="eggNOG" id="COG2207">
    <property type="taxonomic scope" value="Bacteria"/>
</dbReference>
<dbReference type="HOGENOM" id="CLU_091292_0_0_6"/>
<dbReference type="BioCyc" id="ECOL199310:C4327-MONOMER"/>
<dbReference type="Proteomes" id="UP000001410">
    <property type="component" value="Chromosome"/>
</dbReference>
<dbReference type="GO" id="GO:0005829">
    <property type="term" value="C:cytosol"/>
    <property type="evidence" value="ECO:0007669"/>
    <property type="project" value="TreeGrafter"/>
</dbReference>
<dbReference type="GO" id="GO:0003700">
    <property type="term" value="F:DNA-binding transcription factor activity"/>
    <property type="evidence" value="ECO:0007669"/>
    <property type="project" value="InterPro"/>
</dbReference>
<dbReference type="GO" id="GO:0000976">
    <property type="term" value="F:transcription cis-regulatory region binding"/>
    <property type="evidence" value="ECO:0007669"/>
    <property type="project" value="TreeGrafter"/>
</dbReference>
<dbReference type="Gene3D" id="1.10.10.60">
    <property type="entry name" value="Homeodomain-like"/>
    <property type="match status" value="1"/>
</dbReference>
<dbReference type="InterPro" id="IPR009057">
    <property type="entry name" value="Homeodomain-like_sf"/>
</dbReference>
<dbReference type="InterPro" id="IPR018060">
    <property type="entry name" value="HTH_AraC"/>
</dbReference>
<dbReference type="InterPro" id="IPR018062">
    <property type="entry name" value="HTH_AraC-typ_CS"/>
</dbReference>
<dbReference type="InterPro" id="IPR020449">
    <property type="entry name" value="Tscrpt_reg_AraC-type_HTH"/>
</dbReference>
<dbReference type="NCBIfam" id="NF007432">
    <property type="entry name" value="PRK09978.1"/>
    <property type="match status" value="1"/>
</dbReference>
<dbReference type="PANTHER" id="PTHR47894">
    <property type="entry name" value="HTH-TYPE TRANSCRIPTIONAL REGULATOR GADX"/>
    <property type="match status" value="1"/>
</dbReference>
<dbReference type="PANTHER" id="PTHR47894:SF4">
    <property type="entry name" value="HTH-TYPE TRANSCRIPTIONAL REGULATOR GADX"/>
    <property type="match status" value="1"/>
</dbReference>
<dbReference type="Pfam" id="PF12833">
    <property type="entry name" value="HTH_18"/>
    <property type="match status" value="1"/>
</dbReference>
<dbReference type="PRINTS" id="PR00032">
    <property type="entry name" value="HTHARAC"/>
</dbReference>
<dbReference type="SMART" id="SM00342">
    <property type="entry name" value="HTH_ARAC"/>
    <property type="match status" value="1"/>
</dbReference>
<dbReference type="SUPFAM" id="SSF46689">
    <property type="entry name" value="Homeodomain-like"/>
    <property type="match status" value="1"/>
</dbReference>
<dbReference type="PROSITE" id="PS00041">
    <property type="entry name" value="HTH_ARAC_FAMILY_1"/>
    <property type="match status" value="1"/>
</dbReference>
<dbReference type="PROSITE" id="PS01124">
    <property type="entry name" value="HTH_ARAC_FAMILY_2"/>
    <property type="match status" value="1"/>
</dbReference>
<name>GADX_ECOL6</name>
<protein>
    <recommendedName>
        <fullName>HTH-type transcriptional regulator GadX</fullName>
    </recommendedName>
</protein>